<organism>
    <name type="scientific">Pongo abelii</name>
    <name type="common">Sumatran orangutan</name>
    <name type="synonym">Pongo pygmaeus abelii</name>
    <dbReference type="NCBI Taxonomy" id="9601"/>
    <lineage>
        <taxon>Eukaryota</taxon>
        <taxon>Metazoa</taxon>
        <taxon>Chordata</taxon>
        <taxon>Craniata</taxon>
        <taxon>Vertebrata</taxon>
        <taxon>Euteleostomi</taxon>
        <taxon>Mammalia</taxon>
        <taxon>Eutheria</taxon>
        <taxon>Euarchontoglires</taxon>
        <taxon>Primates</taxon>
        <taxon>Haplorrhini</taxon>
        <taxon>Catarrhini</taxon>
        <taxon>Hominidae</taxon>
        <taxon>Pongo</taxon>
    </lineage>
</organism>
<sequence length="264" mass="29866">MLSHNTMVKQRKQQATAIMKEVHGNDVDGMDLGKKVSIPRDIMLEELSHLSNRGARLFKMRQRRSDKYTFENFQYQSRAQINHSIAMQNGKVDGSNLEGGSQQAPLTPPNTPDPRSPPNPDNIAPGYSGPLKEIPPEKFNTTAVPKYYQSPWEQAISNDPELLEALYPKLFKPEGKAELPDYRSFNRVATPFGGFEKASRMVKFKVPDFELLLLTDPRFMSFVNPLSGRRSFNRTPKGWISENIPIVITTEPTDDTTVPESEDL</sequence>
<keyword id="KW-0963">Cytoplasm</keyword>
<keyword id="KW-0488">Methylation</keyword>
<keyword id="KW-0597">Phosphoprotein</keyword>
<keyword id="KW-1185">Reference proteome</keyword>
<protein>
    <recommendedName>
        <fullName>Myozenin-2</fullName>
    </recommendedName>
    <alternativeName>
        <fullName>Calsarcin-1</fullName>
    </alternativeName>
</protein>
<accession>Q5R6I2</accession>
<evidence type="ECO:0000250" key="1"/>
<evidence type="ECO:0000250" key="2">
    <source>
        <dbReference type="UniProtKB" id="Q9JJW5"/>
    </source>
</evidence>
<evidence type="ECO:0000256" key="3">
    <source>
        <dbReference type="SAM" id="MobiDB-lite"/>
    </source>
</evidence>
<evidence type="ECO:0000305" key="4"/>
<proteinExistence type="evidence at transcript level"/>
<gene>
    <name type="primary">MYOZ2</name>
</gene>
<reference key="1">
    <citation type="submission" date="2004-11" db="EMBL/GenBank/DDBJ databases">
        <authorList>
            <consortium name="The German cDNA consortium"/>
        </authorList>
    </citation>
    <scope>NUCLEOTIDE SEQUENCE [LARGE SCALE MRNA]</scope>
    <source>
        <tissue>Heart</tissue>
    </source>
</reference>
<comment type="function">
    <text evidence="1">Myozenins may serve as intracellular binding proteins involved in linking Z line proteins such as alpha-actinin, gamma-filamin, TCAP/telethonin, LDB3/ZASP and localizing calcineurin signaling to the sarcomere. Plays an important role in the modulation of calcineurin signaling. May play a role in myofibrillogenesis (By similarity).</text>
</comment>
<comment type="subunit">
    <text evidence="1">Interacts via its C-terminus with spectrin repeats 3 and 4 of ACTN2. Interacts with ACTN1, LDB3, MYOT and PPP3CA (By similarity).</text>
</comment>
<comment type="subcellular location">
    <subcellularLocation>
        <location evidence="1">Cytoplasm</location>
        <location evidence="1">Myofibril</location>
        <location evidence="1">Sarcomere</location>
        <location evidence="1">Z line</location>
    </subcellularLocation>
    <text evidence="1">Colocalizes with ACTN1 and PPP3CA at the Z-line of heart and skeletal muscle.</text>
</comment>
<comment type="similarity">
    <text evidence="4">Belongs to the myozenin family.</text>
</comment>
<dbReference type="EMBL" id="CR860507">
    <property type="protein sequence ID" value="CAH92629.1"/>
    <property type="molecule type" value="mRNA"/>
</dbReference>
<dbReference type="RefSeq" id="NP_001126540.1">
    <property type="nucleotide sequence ID" value="NM_001133068.1"/>
</dbReference>
<dbReference type="RefSeq" id="XP_054409277.1">
    <property type="nucleotide sequence ID" value="XM_054553302.1"/>
</dbReference>
<dbReference type="FunCoup" id="Q5R6I2">
    <property type="interactions" value="31"/>
</dbReference>
<dbReference type="STRING" id="9601.ENSPPYP00000016781"/>
<dbReference type="Ensembl" id="ENSPPYT00000017461.3">
    <property type="protein sequence ID" value="ENSPPYP00000016781.2"/>
    <property type="gene ID" value="ENSPPYG00000015023.3"/>
</dbReference>
<dbReference type="GeneID" id="100173530"/>
<dbReference type="KEGG" id="pon:100173530"/>
<dbReference type="CTD" id="51778"/>
<dbReference type="eggNOG" id="ENOG502QVA2">
    <property type="taxonomic scope" value="Eukaryota"/>
</dbReference>
<dbReference type="GeneTree" id="ENSGT00950000183027"/>
<dbReference type="HOGENOM" id="CLU_071316_1_1_1"/>
<dbReference type="InParanoid" id="Q5R6I2"/>
<dbReference type="OMA" id="INHRIAM"/>
<dbReference type="OrthoDB" id="9895914at2759"/>
<dbReference type="TreeFam" id="TF331748"/>
<dbReference type="Proteomes" id="UP000001595">
    <property type="component" value="Chromosome 4"/>
</dbReference>
<dbReference type="GO" id="GO:0015629">
    <property type="term" value="C:actin cytoskeleton"/>
    <property type="evidence" value="ECO:0007669"/>
    <property type="project" value="Ensembl"/>
</dbReference>
<dbReference type="GO" id="GO:0030018">
    <property type="term" value="C:Z disc"/>
    <property type="evidence" value="ECO:0007669"/>
    <property type="project" value="UniProtKB-SubCell"/>
</dbReference>
<dbReference type="GO" id="GO:0003779">
    <property type="term" value="F:actin binding"/>
    <property type="evidence" value="ECO:0007669"/>
    <property type="project" value="Ensembl"/>
</dbReference>
<dbReference type="GO" id="GO:0051373">
    <property type="term" value="F:FATZ binding"/>
    <property type="evidence" value="ECO:0007669"/>
    <property type="project" value="TreeGrafter"/>
</dbReference>
<dbReference type="GO" id="GO:0031433">
    <property type="term" value="F:telethonin binding"/>
    <property type="evidence" value="ECO:0007669"/>
    <property type="project" value="Ensembl"/>
</dbReference>
<dbReference type="GO" id="GO:0070885">
    <property type="term" value="P:negative regulation of calcineurin-NFAT signaling cascade"/>
    <property type="evidence" value="ECO:0007669"/>
    <property type="project" value="Ensembl"/>
</dbReference>
<dbReference type="GO" id="GO:0000122">
    <property type="term" value="P:negative regulation of transcription by RNA polymerase II"/>
    <property type="evidence" value="ECO:0007669"/>
    <property type="project" value="Ensembl"/>
</dbReference>
<dbReference type="GO" id="GO:0045214">
    <property type="term" value="P:sarcomere organization"/>
    <property type="evidence" value="ECO:0007669"/>
    <property type="project" value="Ensembl"/>
</dbReference>
<dbReference type="GO" id="GO:0043503">
    <property type="term" value="P:skeletal muscle fiber adaptation"/>
    <property type="evidence" value="ECO:0007669"/>
    <property type="project" value="Ensembl"/>
</dbReference>
<dbReference type="GO" id="GO:0007519">
    <property type="term" value="P:skeletal muscle tissue development"/>
    <property type="evidence" value="ECO:0007669"/>
    <property type="project" value="Ensembl"/>
</dbReference>
<dbReference type="InterPro" id="IPR008438">
    <property type="entry name" value="MYOZ"/>
</dbReference>
<dbReference type="PANTHER" id="PTHR15941">
    <property type="entry name" value="MYOZENIN"/>
    <property type="match status" value="1"/>
</dbReference>
<dbReference type="PANTHER" id="PTHR15941:SF9">
    <property type="entry name" value="MYOZENIN-2"/>
    <property type="match status" value="1"/>
</dbReference>
<dbReference type="Pfam" id="PF05556">
    <property type="entry name" value="Calsarcin"/>
    <property type="match status" value="1"/>
</dbReference>
<name>MYOZ2_PONAB</name>
<feature type="chain" id="PRO_0000111101" description="Myozenin-2">
    <location>
        <begin position="1"/>
        <end position="264"/>
    </location>
</feature>
<feature type="region of interest" description="Disordered" evidence="3">
    <location>
        <begin position="90"/>
        <end position="135"/>
    </location>
</feature>
<feature type="compositionally biased region" description="Pro residues" evidence="3">
    <location>
        <begin position="106"/>
        <end position="120"/>
    </location>
</feature>
<feature type="modified residue" description="Omega-N-methylarginine" evidence="2">
    <location>
        <position position="53"/>
    </location>
</feature>
<feature type="modified residue" description="Phosphoserine" evidence="2">
    <location>
        <position position="101"/>
    </location>
</feature>
<feature type="modified residue" description="Phosphothreonine" evidence="2">
    <location>
        <position position="107"/>
    </location>
</feature>
<feature type="modified residue" description="Phosphothreonine" evidence="2">
    <location>
        <position position="111"/>
    </location>
</feature>
<feature type="modified residue" description="Phosphoserine" evidence="2">
    <location>
        <position position="116"/>
    </location>
</feature>